<keyword id="KW-0004">4Fe-4S</keyword>
<keyword id="KW-0150">Chloroplast</keyword>
<keyword id="KW-0408">Iron</keyword>
<keyword id="KW-0411">Iron-sulfur</keyword>
<keyword id="KW-0472">Membrane</keyword>
<keyword id="KW-0479">Metal-binding</keyword>
<keyword id="KW-0520">NAD</keyword>
<keyword id="KW-0521">NADP</keyword>
<keyword id="KW-0934">Plastid</keyword>
<keyword id="KW-0618">Plastoquinone</keyword>
<keyword id="KW-0874">Quinone</keyword>
<keyword id="KW-1185">Reference proteome</keyword>
<keyword id="KW-0793">Thylakoid</keyword>
<keyword id="KW-1278">Translocase</keyword>
<keyword id="KW-0813">Transport</keyword>
<geneLocation type="chloroplast"/>
<organism>
    <name type="scientific">Physcomitrium patens</name>
    <name type="common">Spreading-leaved earth moss</name>
    <name type="synonym">Physcomitrella patens</name>
    <dbReference type="NCBI Taxonomy" id="3218"/>
    <lineage>
        <taxon>Eukaryota</taxon>
        <taxon>Viridiplantae</taxon>
        <taxon>Streptophyta</taxon>
        <taxon>Embryophyta</taxon>
        <taxon>Bryophyta</taxon>
        <taxon>Bryophytina</taxon>
        <taxon>Bryopsida</taxon>
        <taxon>Funariidae</taxon>
        <taxon>Funariales</taxon>
        <taxon>Funariaceae</taxon>
        <taxon>Physcomitrium</taxon>
    </lineage>
</organism>
<gene>
    <name evidence="1" type="primary">ndhK</name>
</gene>
<proteinExistence type="inferred from homology"/>
<sequence>MVLNSNYDNYKNKITNSMKPLINSVNPAFSNQENPNSVILTTFNDFTNWARLSSLWPLLYGTSCCFIEFASLIGSRFDFDRYGLVPRSSPRQADLIITAGTVTMKMAPSLVRLYEQMPEPKYVIAMGACTITGGMFSTDSYSTVRGVDKLIPVDIYLPGCPPKPEAIIDAIIKLRKKIAQETYKDKSKFQQGNRYLTLNHKFHFVSNINTGQYNKQLDTKISNSQFNSTLDTFIPIKKNENLTFLLKNEDNKENIENKSKD</sequence>
<protein>
    <recommendedName>
        <fullName evidence="1">NAD(P)H-quinone oxidoreductase subunit K, chloroplastic</fullName>
        <ecNumber evidence="1">7.1.1.-</ecNumber>
    </recommendedName>
    <alternativeName>
        <fullName evidence="1">NAD(P)H dehydrogenase subunit K</fullName>
    </alternativeName>
    <alternativeName>
        <fullName evidence="1">NADH-plastoquinone oxidoreductase subunit K</fullName>
    </alternativeName>
</protein>
<dbReference type="EC" id="7.1.1.-" evidence="1"/>
<dbReference type="EMBL" id="AP005672">
    <property type="protein sequence ID" value="BAC85048.1"/>
    <property type="molecule type" value="Genomic_DNA"/>
</dbReference>
<dbReference type="RefSeq" id="NP_904198.1">
    <property type="nucleotide sequence ID" value="NC_005087.2"/>
</dbReference>
<dbReference type="RefSeq" id="YP_009477528.1">
    <property type="nucleotide sequence ID" value="NC_037465.1"/>
</dbReference>
<dbReference type="SMR" id="Q6YXQ9"/>
<dbReference type="FunCoup" id="Q6YXQ9">
    <property type="interactions" value="45"/>
</dbReference>
<dbReference type="STRING" id="3218.Q6YXQ9"/>
<dbReference type="GeneID" id="2546794"/>
<dbReference type="GeneID" id="36487145"/>
<dbReference type="KEGG" id="ppp:2546794"/>
<dbReference type="InParanoid" id="Q6YXQ9"/>
<dbReference type="OrthoDB" id="1889813at2759"/>
<dbReference type="Proteomes" id="UP000006727">
    <property type="component" value="Chloroplast"/>
</dbReference>
<dbReference type="GO" id="GO:0009535">
    <property type="term" value="C:chloroplast thylakoid membrane"/>
    <property type="evidence" value="ECO:0007669"/>
    <property type="project" value="UniProtKB-SubCell"/>
</dbReference>
<dbReference type="GO" id="GO:0045271">
    <property type="term" value="C:respiratory chain complex I"/>
    <property type="evidence" value="ECO:0000318"/>
    <property type="project" value="GO_Central"/>
</dbReference>
<dbReference type="GO" id="GO:0051539">
    <property type="term" value="F:4 iron, 4 sulfur cluster binding"/>
    <property type="evidence" value="ECO:0007669"/>
    <property type="project" value="UniProtKB-KW"/>
</dbReference>
<dbReference type="GO" id="GO:0005506">
    <property type="term" value="F:iron ion binding"/>
    <property type="evidence" value="ECO:0007669"/>
    <property type="project" value="UniProtKB-UniRule"/>
</dbReference>
<dbReference type="GO" id="GO:0008137">
    <property type="term" value="F:NADH dehydrogenase (ubiquinone) activity"/>
    <property type="evidence" value="ECO:0000318"/>
    <property type="project" value="GO_Central"/>
</dbReference>
<dbReference type="GO" id="GO:0048038">
    <property type="term" value="F:quinone binding"/>
    <property type="evidence" value="ECO:0007669"/>
    <property type="project" value="UniProtKB-KW"/>
</dbReference>
<dbReference type="GO" id="GO:0009060">
    <property type="term" value="P:aerobic respiration"/>
    <property type="evidence" value="ECO:0000318"/>
    <property type="project" value="GO_Central"/>
</dbReference>
<dbReference type="GO" id="GO:0015990">
    <property type="term" value="P:electron transport coupled proton transport"/>
    <property type="evidence" value="ECO:0000318"/>
    <property type="project" value="GO_Central"/>
</dbReference>
<dbReference type="GO" id="GO:0019684">
    <property type="term" value="P:photosynthesis, light reaction"/>
    <property type="evidence" value="ECO:0007669"/>
    <property type="project" value="UniProtKB-UniRule"/>
</dbReference>
<dbReference type="FunFam" id="3.40.50.12280:FF:000003">
    <property type="entry name" value="NAD(P)H-quinone oxidoreductase subunit K, chloroplastic"/>
    <property type="match status" value="1"/>
</dbReference>
<dbReference type="Gene3D" id="3.40.50.12280">
    <property type="match status" value="1"/>
</dbReference>
<dbReference type="HAMAP" id="MF_01356">
    <property type="entry name" value="NDH1_NuoB"/>
    <property type="match status" value="1"/>
</dbReference>
<dbReference type="InterPro" id="IPR006137">
    <property type="entry name" value="NADH_UbQ_OxRdtase-like_20kDa"/>
</dbReference>
<dbReference type="InterPro" id="IPR006138">
    <property type="entry name" value="NADH_UQ_OxRdtase_20Kd_su"/>
</dbReference>
<dbReference type="NCBIfam" id="TIGR01957">
    <property type="entry name" value="nuoB_fam"/>
    <property type="match status" value="1"/>
</dbReference>
<dbReference type="NCBIfam" id="NF005012">
    <property type="entry name" value="PRK06411.1"/>
    <property type="match status" value="1"/>
</dbReference>
<dbReference type="PANTHER" id="PTHR11995">
    <property type="entry name" value="NADH DEHYDROGENASE"/>
    <property type="match status" value="1"/>
</dbReference>
<dbReference type="PANTHER" id="PTHR11995:SF14">
    <property type="entry name" value="NADH DEHYDROGENASE [UBIQUINONE] IRON-SULFUR PROTEIN 7, MITOCHONDRIAL"/>
    <property type="match status" value="1"/>
</dbReference>
<dbReference type="Pfam" id="PF01058">
    <property type="entry name" value="Oxidored_q6"/>
    <property type="match status" value="1"/>
</dbReference>
<dbReference type="SUPFAM" id="SSF56770">
    <property type="entry name" value="HydA/Nqo6-like"/>
    <property type="match status" value="1"/>
</dbReference>
<dbReference type="PROSITE" id="PS01150">
    <property type="entry name" value="COMPLEX1_20K"/>
    <property type="match status" value="1"/>
</dbReference>
<reference key="1">
    <citation type="journal article" date="2003" name="Nucleic Acids Res.">
        <title>Complete chloroplast DNA sequence of the moss Physcomitrella patens: evidence for the loss and relocation of rpoA from the chloroplast to the nucleus.</title>
        <authorList>
            <person name="Sugiura C."/>
            <person name="Kobayashi Y."/>
            <person name="Setsuyuki A."/>
            <person name="Sugita C."/>
            <person name="Sugita M."/>
        </authorList>
    </citation>
    <scope>NUCLEOTIDE SEQUENCE [LARGE SCALE GENOMIC DNA]</scope>
    <source>
        <strain>cv. Gransden 2004</strain>
    </source>
</reference>
<comment type="function">
    <text evidence="1">NDH shuttles electrons from NAD(P)H:plastoquinone, via FMN and iron-sulfur (Fe-S) centers, to quinones in the photosynthetic chain and possibly in a chloroplast respiratory chain. The immediate electron acceptor for the enzyme in this species is believed to be plastoquinone. Couples the redox reaction to proton translocation, and thus conserves the redox energy in a proton gradient.</text>
</comment>
<comment type="catalytic activity">
    <reaction evidence="1">
        <text>a plastoquinone + NADH + (n+1) H(+)(in) = a plastoquinol + NAD(+) + n H(+)(out)</text>
        <dbReference type="Rhea" id="RHEA:42608"/>
        <dbReference type="Rhea" id="RHEA-COMP:9561"/>
        <dbReference type="Rhea" id="RHEA-COMP:9562"/>
        <dbReference type="ChEBI" id="CHEBI:15378"/>
        <dbReference type="ChEBI" id="CHEBI:17757"/>
        <dbReference type="ChEBI" id="CHEBI:57540"/>
        <dbReference type="ChEBI" id="CHEBI:57945"/>
        <dbReference type="ChEBI" id="CHEBI:62192"/>
    </reaction>
</comment>
<comment type="catalytic activity">
    <reaction evidence="1">
        <text>a plastoquinone + NADPH + (n+1) H(+)(in) = a plastoquinol + NADP(+) + n H(+)(out)</text>
        <dbReference type="Rhea" id="RHEA:42612"/>
        <dbReference type="Rhea" id="RHEA-COMP:9561"/>
        <dbReference type="Rhea" id="RHEA-COMP:9562"/>
        <dbReference type="ChEBI" id="CHEBI:15378"/>
        <dbReference type="ChEBI" id="CHEBI:17757"/>
        <dbReference type="ChEBI" id="CHEBI:57783"/>
        <dbReference type="ChEBI" id="CHEBI:58349"/>
        <dbReference type="ChEBI" id="CHEBI:62192"/>
    </reaction>
</comment>
<comment type="cofactor">
    <cofactor evidence="1">
        <name>[4Fe-4S] cluster</name>
        <dbReference type="ChEBI" id="CHEBI:49883"/>
    </cofactor>
    <text evidence="1">Binds 1 [4Fe-4S] cluster.</text>
</comment>
<comment type="subunit">
    <text evidence="1">NDH is composed of at least 16 different subunits, 5 of which are encoded in the nucleus.</text>
</comment>
<comment type="subcellular location">
    <subcellularLocation>
        <location evidence="1">Plastid</location>
        <location evidence="1">Chloroplast thylakoid membrane</location>
        <topology evidence="1">Peripheral membrane protein</topology>
        <orientation evidence="1">Stromal side</orientation>
    </subcellularLocation>
</comment>
<comment type="similarity">
    <text evidence="1">Belongs to the complex I 20 kDa subunit family.</text>
</comment>
<evidence type="ECO:0000255" key="1">
    <source>
        <dbReference type="HAMAP-Rule" id="MF_01356"/>
    </source>
</evidence>
<accession>Q6YXQ9</accession>
<name>NDHK_PHYPA</name>
<feature type="chain" id="PRO_0000358575" description="NAD(P)H-quinone oxidoreductase subunit K, chloroplastic">
    <location>
        <begin position="1"/>
        <end position="261"/>
    </location>
</feature>
<feature type="binding site" evidence="1">
    <location>
        <position position="64"/>
    </location>
    <ligand>
        <name>[4Fe-4S] cluster</name>
        <dbReference type="ChEBI" id="CHEBI:49883"/>
    </ligand>
</feature>
<feature type="binding site" evidence="1">
    <location>
        <position position="65"/>
    </location>
    <ligand>
        <name>[4Fe-4S] cluster</name>
        <dbReference type="ChEBI" id="CHEBI:49883"/>
    </ligand>
</feature>
<feature type="binding site" evidence="1">
    <location>
        <position position="129"/>
    </location>
    <ligand>
        <name>[4Fe-4S] cluster</name>
        <dbReference type="ChEBI" id="CHEBI:49883"/>
    </ligand>
</feature>
<feature type="binding site" evidence="1">
    <location>
        <position position="160"/>
    </location>
    <ligand>
        <name>[4Fe-4S] cluster</name>
        <dbReference type="ChEBI" id="CHEBI:49883"/>
    </ligand>
</feature>